<organism>
    <name type="scientific">Chlorocebus aethiops</name>
    <name type="common">Green monkey</name>
    <name type="synonym">Cercopithecus aethiops</name>
    <dbReference type="NCBI Taxonomy" id="9534"/>
    <lineage>
        <taxon>Eukaryota</taxon>
        <taxon>Metazoa</taxon>
        <taxon>Chordata</taxon>
        <taxon>Craniata</taxon>
        <taxon>Vertebrata</taxon>
        <taxon>Euteleostomi</taxon>
        <taxon>Mammalia</taxon>
        <taxon>Eutheria</taxon>
        <taxon>Euarchontoglires</taxon>
        <taxon>Primates</taxon>
        <taxon>Haplorrhini</taxon>
        <taxon>Catarrhini</taxon>
        <taxon>Cercopithecidae</taxon>
        <taxon>Cercopithecinae</taxon>
        <taxon>Chlorocebus</taxon>
    </lineage>
</organism>
<comment type="function">
    <text evidence="1">Mannose-specific lectin. May recognize sugar residues of glycoproteins, glycolipids, or glycosylphosphatidyl inositol anchors and may be involved in the sorting or recycling of proteins, lipids, or both. The LMAN1-MCFD2 complex forms a specific cargo receptor for the ER-to-Golgi transport of selected proteins (By similarity).</text>
</comment>
<comment type="subunit">
    <text evidence="2">Exists both as a covalent disulfide-linked homohexamer, and a complex of three disulfide-linked dimers non-covalently kept together. Interacts with MCFD2. May interact with TMEM115. Interacts with RAB3GAP1 and RAB3GAP2. Interacts with UBXN6. Interacts with SERPINA1/alpha1-antitrypsin (By similarity). Interacts with BET1 (By similarity).</text>
</comment>
<comment type="interaction">
    <interactant intactId="EBI-25399342">
        <id>Q9TU32</id>
    </interactant>
    <interactant intactId="EBI-2689785">
        <id>Q8NI22</id>
        <label>MCFD2</label>
    </interactant>
    <organismsDiffer>true</organismsDiffer>
    <experiments>2</experiments>
</comment>
<comment type="subcellular location">
    <subcellularLocation>
        <location evidence="1">Endoplasmic reticulum-Golgi intermediate compartment membrane</location>
        <topology evidence="1">Single-pass type I membrane protein</topology>
    </subcellularLocation>
    <subcellularLocation>
        <location evidence="1">Golgi apparatus membrane</location>
        <topology evidence="1">Single-pass membrane protein</topology>
    </subcellularLocation>
    <subcellularLocation>
        <location evidence="1">Endoplasmic reticulum membrane</location>
        <topology evidence="1">Single-pass membrane protein</topology>
    </subcellularLocation>
</comment>
<comment type="domain">
    <text evidence="1">The FF ER export motif at the C-terminus is not sufficient to support endoplasmic reticulum exit, and needs assistance of Gln-501 for proper recognition of COPII coat components.</text>
</comment>
<accession>Q9TU32</accession>
<reference key="1">
    <citation type="journal article" date="1999" name="Biochim. Biophys. Acta">
        <title>Sequence and expression of the monkey homologue of the ER-Golgi intermediate compartment lectin, ERGIC-53.</title>
        <authorList>
            <person name="Sarnataro S."/>
            <person name="Caporaso M.G."/>
            <person name="Bonatti S."/>
            <person name="Remondelli P."/>
        </authorList>
    </citation>
    <scope>NUCLEOTIDE SEQUENCE [MRNA]</scope>
</reference>
<sequence>MAGSRRRGLQARVRPLFCALLLSLSRFVGGDGVGGDPAAGLPHRRFEYKYSFKGPHLVQSDGTVPFWAHAGNAIPSSDQIRVAPSLKSQRGSVWTKAKAAFENWEVEVTFRVTGRGRIGADGLAIWYTENQGLEGPVFGSADLWNGVGIFFDSFDNDGKKNNPAIVIIGNNGQIHYDHQNDGASQALASCQRDFRNKPYPVRAKIIYYQKTLTVMINNGFTPDKNDYEFCAKVENMIIPAQGHFGVSAATGGLADDHDVLSFLTFQLTEPGKEPPTPDKEISEKEKEKYQEEFEHFQQELDKKKEEFQKGHPDLQGQPAEEIFESVGDRELRQVFEGQNRIHLEIKQLNRQLDMILDEQRRYVSSLTEEISKRGAGMPGQHGQISQQELDTVVKTQHEILRQVNEMKNSMSETVRLVSGMQHPGSAGGVYETAQHFADIKEHLHTVKRDIDNLVQRHMLSNEKPKCPELPPFPSCLSTVHFIIFVVVQTVLFIGYIMYRSQQEAAAKKFF</sequence>
<proteinExistence type="evidence at protein level"/>
<evidence type="ECO:0000250" key="1"/>
<evidence type="ECO:0000250" key="2">
    <source>
        <dbReference type="UniProtKB" id="P49257"/>
    </source>
</evidence>
<evidence type="ECO:0000255" key="3"/>
<evidence type="ECO:0000255" key="4">
    <source>
        <dbReference type="PROSITE-ProRule" id="PRU00658"/>
    </source>
</evidence>
<protein>
    <recommendedName>
        <fullName>Protein ERGIC-53</fullName>
    </recommendedName>
    <alternativeName>
        <fullName>ER-Golgi intermediate compartment 53 kDa protein</fullName>
    </alternativeName>
    <alternativeName>
        <fullName>Lectin mannose-binding 1</fullName>
    </alternativeName>
</protein>
<dbReference type="EMBL" id="AF160877">
    <property type="protein sequence ID" value="AAF13155.1"/>
    <property type="molecule type" value="mRNA"/>
</dbReference>
<dbReference type="SMR" id="Q9TU32"/>
<dbReference type="IntAct" id="Q9TU32">
    <property type="interactions" value="1"/>
</dbReference>
<dbReference type="GO" id="GO:0030134">
    <property type="term" value="C:COPII-coated ER to Golgi transport vesicle"/>
    <property type="evidence" value="ECO:0007669"/>
    <property type="project" value="TreeGrafter"/>
</dbReference>
<dbReference type="GO" id="GO:0005789">
    <property type="term" value="C:endoplasmic reticulum membrane"/>
    <property type="evidence" value="ECO:0007669"/>
    <property type="project" value="UniProtKB-SubCell"/>
</dbReference>
<dbReference type="GO" id="GO:0033116">
    <property type="term" value="C:endoplasmic reticulum-Golgi intermediate compartment membrane"/>
    <property type="evidence" value="ECO:0007669"/>
    <property type="project" value="UniProtKB-SubCell"/>
</dbReference>
<dbReference type="GO" id="GO:0000139">
    <property type="term" value="C:Golgi membrane"/>
    <property type="evidence" value="ECO:0007669"/>
    <property type="project" value="UniProtKB-SubCell"/>
</dbReference>
<dbReference type="GO" id="GO:0005537">
    <property type="term" value="F:D-mannose binding"/>
    <property type="evidence" value="ECO:0007669"/>
    <property type="project" value="TreeGrafter"/>
</dbReference>
<dbReference type="GO" id="GO:0046872">
    <property type="term" value="F:metal ion binding"/>
    <property type="evidence" value="ECO:0007669"/>
    <property type="project" value="UniProtKB-KW"/>
</dbReference>
<dbReference type="GO" id="GO:0006888">
    <property type="term" value="P:endoplasmic reticulum to Golgi vesicle-mediated transport"/>
    <property type="evidence" value="ECO:0007669"/>
    <property type="project" value="TreeGrafter"/>
</dbReference>
<dbReference type="GO" id="GO:0015031">
    <property type="term" value="P:protein transport"/>
    <property type="evidence" value="ECO:0007669"/>
    <property type="project" value="UniProtKB-KW"/>
</dbReference>
<dbReference type="CDD" id="cd06902">
    <property type="entry name" value="lectin_ERGIC-53_ERGL"/>
    <property type="match status" value="1"/>
</dbReference>
<dbReference type="FunFam" id="2.60.120.200:FF:000028">
    <property type="entry name" value="Blast:Protein ERGIC-53"/>
    <property type="match status" value="1"/>
</dbReference>
<dbReference type="Gene3D" id="2.60.120.200">
    <property type="match status" value="1"/>
</dbReference>
<dbReference type="InterPro" id="IPR013320">
    <property type="entry name" value="ConA-like_dom_sf"/>
</dbReference>
<dbReference type="InterPro" id="IPR051136">
    <property type="entry name" value="Intracellular_Lectin-GPT"/>
</dbReference>
<dbReference type="InterPro" id="IPR005052">
    <property type="entry name" value="Lectin_leg"/>
</dbReference>
<dbReference type="PANTHER" id="PTHR12223:SF32">
    <property type="entry name" value="PROTEIN ERGIC-53"/>
    <property type="match status" value="1"/>
</dbReference>
<dbReference type="PANTHER" id="PTHR12223">
    <property type="entry name" value="VESICULAR MANNOSE-BINDING LECTIN"/>
    <property type="match status" value="1"/>
</dbReference>
<dbReference type="Pfam" id="PF03388">
    <property type="entry name" value="Lectin_leg-like"/>
    <property type="match status" value="1"/>
</dbReference>
<dbReference type="SUPFAM" id="SSF49899">
    <property type="entry name" value="Concanavalin A-like lectins/glucanases"/>
    <property type="match status" value="1"/>
</dbReference>
<dbReference type="PROSITE" id="PS51328">
    <property type="entry name" value="L_LECTIN_LIKE"/>
    <property type="match status" value="1"/>
</dbReference>
<keyword id="KW-1015">Disulfide bond</keyword>
<keyword id="KW-0256">Endoplasmic reticulum</keyword>
<keyword id="KW-0931">ER-Golgi transport</keyword>
<keyword id="KW-0333">Golgi apparatus</keyword>
<keyword id="KW-0430">Lectin</keyword>
<keyword id="KW-0472">Membrane</keyword>
<keyword id="KW-0479">Metal-binding</keyword>
<keyword id="KW-0597">Phosphoprotein</keyword>
<keyword id="KW-0653">Protein transport</keyword>
<keyword id="KW-0732">Signal</keyword>
<keyword id="KW-0812">Transmembrane</keyword>
<keyword id="KW-1133">Transmembrane helix</keyword>
<keyword id="KW-0813">Transport</keyword>
<gene>
    <name type="primary">LMAN1</name>
    <name type="synonym">ERGIC53</name>
</gene>
<feature type="signal peptide" evidence="1">
    <location>
        <begin position="1"/>
        <end position="30"/>
    </location>
</feature>
<feature type="chain" id="PRO_0000017659" description="Protein ERGIC-53">
    <location>
        <begin position="31"/>
        <end position="510"/>
    </location>
</feature>
<feature type="topological domain" description="Lumenal" evidence="3">
    <location>
        <begin position="31"/>
        <end position="477"/>
    </location>
</feature>
<feature type="transmembrane region" description="Helical" evidence="3">
    <location>
        <begin position="478"/>
        <end position="498"/>
    </location>
</feature>
<feature type="topological domain" description="Cytoplasmic" evidence="3">
    <location>
        <begin position="499"/>
        <end position="510"/>
    </location>
</feature>
<feature type="domain" description="L-type lectin-like" evidence="4">
    <location>
        <begin position="44"/>
        <end position="267"/>
    </location>
</feature>
<feature type="region of interest" description="Mediates interaction with RAB3GAP1, RAB3GAP2 and UBXN6" evidence="2">
    <location>
        <begin position="499"/>
        <end position="510"/>
    </location>
</feature>
<feature type="short sequence motif" description="ER export motif" evidence="1">
    <location>
        <begin position="509"/>
        <end position="510"/>
    </location>
</feature>
<feature type="binding site" evidence="4">
    <location>
        <position position="88"/>
    </location>
    <ligand>
        <name>a carbohydrate</name>
        <dbReference type="ChEBI" id="CHEBI:16646"/>
    </ligand>
</feature>
<feature type="binding site" evidence="4">
    <location>
        <position position="121"/>
    </location>
    <ligand>
        <name>a carbohydrate</name>
        <dbReference type="ChEBI" id="CHEBI:16646"/>
    </ligand>
</feature>
<feature type="binding site" evidence="4">
    <location>
        <position position="152"/>
    </location>
    <ligand>
        <name>Ca(2+)</name>
        <dbReference type="ChEBI" id="CHEBI:29108"/>
    </ligand>
</feature>
<feature type="binding site" evidence="4">
    <location>
        <position position="154"/>
    </location>
    <ligand>
        <name>Ca(2+)</name>
        <dbReference type="ChEBI" id="CHEBI:29108"/>
    </ligand>
</feature>
<feature type="binding site" evidence="4">
    <location>
        <position position="156"/>
    </location>
    <ligand>
        <name>a carbohydrate</name>
        <dbReference type="ChEBI" id="CHEBI:16646"/>
    </ligand>
</feature>
<feature type="binding site" evidence="4">
    <location>
        <position position="156"/>
    </location>
    <ligand>
        <name>Ca(2+)</name>
        <dbReference type="ChEBI" id="CHEBI:29108"/>
    </ligand>
</feature>
<feature type="binding site" evidence="4">
    <location>
        <position position="178"/>
    </location>
    <ligand>
        <name>a carbohydrate</name>
        <dbReference type="ChEBI" id="CHEBI:16646"/>
    </ligand>
</feature>
<feature type="binding site" evidence="4">
    <location>
        <position position="181"/>
    </location>
    <ligand>
        <name>Ca(2+)</name>
        <dbReference type="ChEBI" id="CHEBI:29108"/>
    </ligand>
</feature>
<feature type="binding site" evidence="4">
    <location>
        <begin position="251"/>
        <end position="253"/>
    </location>
    <ligand>
        <name>a carbohydrate</name>
        <dbReference type="ChEBI" id="CHEBI:16646"/>
    </ligand>
</feature>
<feature type="site" description="Required for ER export" evidence="1">
    <location>
        <position position="501"/>
    </location>
</feature>
<feature type="modified residue" description="Phosphoserine" evidence="2">
    <location>
        <position position="425"/>
    </location>
</feature>
<feature type="disulfide bond" evidence="4">
    <location>
        <begin position="190"/>
        <end position="230"/>
    </location>
</feature>
<feature type="disulfide bond" description="Interchain" evidence="4">
    <location>
        <position position="466"/>
    </location>
</feature>
<feature type="disulfide bond" description="Interchain" evidence="4">
    <location>
        <position position="475"/>
    </location>
</feature>
<name>LMAN1_CHLAE</name>